<sequence length="122" mass="13962">MANFFVRLWESVFEPGTSPQLIIATHVSFVALLLTLIWLIYATNGNIHFYALFCISLLLWITVIWFINELSHVKLKDNDELDKDANKKDDSAIKEDSEDKQESGKSTSTARRTQAQSRSRKA</sequence>
<reference key="1">
    <citation type="journal article" date="1997" name="Nature">
        <title>The nucleotide sequence of Saccharomyces cerevisiae chromosome XIII.</title>
        <authorList>
            <person name="Bowman S."/>
            <person name="Churcher C.M."/>
            <person name="Badcock K."/>
            <person name="Brown D."/>
            <person name="Chillingworth T."/>
            <person name="Connor R."/>
            <person name="Dedman K."/>
            <person name="Devlin K."/>
            <person name="Gentles S."/>
            <person name="Hamlin N."/>
            <person name="Hunt S."/>
            <person name="Jagels K."/>
            <person name="Lye G."/>
            <person name="Moule S."/>
            <person name="Odell C."/>
            <person name="Pearson D."/>
            <person name="Rajandream M.A."/>
            <person name="Rice P."/>
            <person name="Skelton J."/>
            <person name="Walsh S.V."/>
            <person name="Whitehead S."/>
            <person name="Barrell B.G."/>
        </authorList>
    </citation>
    <scope>NUCLEOTIDE SEQUENCE [LARGE SCALE GENOMIC DNA]</scope>
    <source>
        <strain>ATCC 204508 / S288c</strain>
    </source>
</reference>
<reference key="2">
    <citation type="journal article" date="2014" name="G3 (Bethesda)">
        <title>The reference genome sequence of Saccharomyces cerevisiae: Then and now.</title>
        <authorList>
            <person name="Engel S.R."/>
            <person name="Dietrich F.S."/>
            <person name="Fisk D.G."/>
            <person name="Binkley G."/>
            <person name="Balakrishnan R."/>
            <person name="Costanzo M.C."/>
            <person name="Dwight S.S."/>
            <person name="Hitz B.C."/>
            <person name="Karra K."/>
            <person name="Nash R.S."/>
            <person name="Weng S."/>
            <person name="Wong E.D."/>
            <person name="Lloyd P."/>
            <person name="Skrzypek M.S."/>
            <person name="Miyasato S.R."/>
            <person name="Simison M."/>
            <person name="Cherry J.M."/>
        </authorList>
    </citation>
    <scope>GENOME REANNOTATION</scope>
    <source>
        <strain>ATCC 204508 / S288c</strain>
    </source>
</reference>
<reference key="3">
    <citation type="journal article" date="2007" name="Genome Res.">
        <title>Approaching a complete repository of sequence-verified protein-encoding clones for Saccharomyces cerevisiae.</title>
        <authorList>
            <person name="Hu Y."/>
            <person name="Rolfs A."/>
            <person name="Bhullar B."/>
            <person name="Murthy T.V.S."/>
            <person name="Zhu C."/>
            <person name="Berger M.F."/>
            <person name="Camargo A.A."/>
            <person name="Kelley F."/>
            <person name="McCarron S."/>
            <person name="Jepson D."/>
            <person name="Richardson A."/>
            <person name="Raphael J."/>
            <person name="Moreira D."/>
            <person name="Taycher E."/>
            <person name="Zuo D."/>
            <person name="Mohr S."/>
            <person name="Kane M.F."/>
            <person name="Williamson J."/>
            <person name="Simpson A.J.G."/>
            <person name="Bulyk M.L."/>
            <person name="Harlow E."/>
            <person name="Marsischky G."/>
            <person name="Kolodner R.D."/>
            <person name="LaBaer J."/>
        </authorList>
    </citation>
    <scope>NUCLEOTIDE SEQUENCE [GENOMIC DNA]</scope>
    <source>
        <strain>ATCC 204508 / S288c</strain>
    </source>
</reference>
<reference key="4">
    <citation type="journal article" date="2003" name="Nature">
        <title>Global analysis of protein localization in budding yeast.</title>
        <authorList>
            <person name="Huh W.-K."/>
            <person name="Falvo J.V."/>
            <person name="Gerke L.C."/>
            <person name="Carroll A.S."/>
            <person name="Howson R.W."/>
            <person name="Weissman J.S."/>
            <person name="O'Shea E.K."/>
        </authorList>
    </citation>
    <scope>SUBCELLULAR LOCATION [LARGE SCALE ANALYSIS]</scope>
</reference>
<reference key="5">
    <citation type="journal article" date="2003" name="Nature">
        <title>Global analysis of protein expression in yeast.</title>
        <authorList>
            <person name="Ghaemmaghami S."/>
            <person name="Huh W.-K."/>
            <person name="Bower K."/>
            <person name="Howson R.W."/>
            <person name="Belle A."/>
            <person name="Dephoure N."/>
            <person name="O'Shea E.K."/>
            <person name="Weissman J.S."/>
        </authorList>
    </citation>
    <scope>LEVEL OF PROTEIN EXPRESSION [LARGE SCALE ANALYSIS]</scope>
</reference>
<reference key="6">
    <citation type="journal article" date="2006" name="J. Biol. Chem.">
        <title>PKR1 encodes an assembly factor for the yeast V-type ATPase.</title>
        <authorList>
            <person name="Davis-Kaplan S.R."/>
            <person name="Compton M.A."/>
            <person name="Flannery A.R."/>
            <person name="Ward D.M."/>
            <person name="Kaplan J."/>
            <person name="Stevens T.H."/>
            <person name="Graham L.A."/>
        </authorList>
    </citation>
    <scope>FUNCTION</scope>
    <scope>SUBCELLULAR LOCATION</scope>
</reference>
<reference key="7">
    <citation type="journal article" date="2006" name="Proc. Natl. Acad. Sci. U.S.A.">
        <title>A global topology map of the Saccharomyces cerevisiae membrane proteome.</title>
        <authorList>
            <person name="Kim H."/>
            <person name="Melen K."/>
            <person name="Oesterberg M."/>
            <person name="von Heijne G."/>
        </authorList>
    </citation>
    <scope>TOPOLOGY [LARGE SCALE ANALYSIS]</scope>
    <source>
        <strain>ATCC 208353 / W303-1A</strain>
    </source>
</reference>
<gene>
    <name type="primary">PKR1</name>
    <name type="ordered locus">YMR123W</name>
    <name type="ORF">YM8564.05</name>
</gene>
<comment type="function">
    <text evidence="5">Functions together with the other V-type ATPase assembly factors in the endoplasmic reticulum to efficiently assemble the V-type ATPase membrane sector V(0).</text>
</comment>
<comment type="subcellular location">
    <subcellularLocation>
        <location evidence="3 5">Endoplasmic reticulum membrane</location>
        <topology evidence="3 5">Multi-pass membrane protein</topology>
    </subcellularLocation>
</comment>
<comment type="miscellaneous">
    <text evidence="4">Present with 5750 molecules/cell in log phase SD medium.</text>
</comment>
<comment type="similarity">
    <text evidence="6">Belongs to the PKR1 family.</text>
</comment>
<organism>
    <name type="scientific">Saccharomyces cerevisiae (strain ATCC 204508 / S288c)</name>
    <name type="common">Baker's yeast</name>
    <dbReference type="NCBI Taxonomy" id="559292"/>
    <lineage>
        <taxon>Eukaryota</taxon>
        <taxon>Fungi</taxon>
        <taxon>Dikarya</taxon>
        <taxon>Ascomycota</taxon>
        <taxon>Saccharomycotina</taxon>
        <taxon>Saccharomycetes</taxon>
        <taxon>Saccharomycetales</taxon>
        <taxon>Saccharomycetaceae</taxon>
        <taxon>Saccharomyces</taxon>
    </lineage>
</organism>
<proteinExistence type="evidence at protein level"/>
<keyword id="KW-0256">Endoplasmic reticulum</keyword>
<keyword id="KW-0472">Membrane</keyword>
<keyword id="KW-1185">Reference proteome</keyword>
<keyword id="KW-0812">Transmembrane</keyword>
<keyword id="KW-1133">Transmembrane helix</keyword>
<name>PKR1_YEAST</name>
<accession>Q03880</accession>
<accession>D6VZU6</accession>
<dbReference type="EMBL" id="Z49273">
    <property type="protein sequence ID" value="CAA89272.1"/>
    <property type="molecule type" value="Genomic_DNA"/>
</dbReference>
<dbReference type="EMBL" id="AY558408">
    <property type="protein sequence ID" value="AAS56734.1"/>
    <property type="molecule type" value="Genomic_DNA"/>
</dbReference>
<dbReference type="EMBL" id="BK006946">
    <property type="protein sequence ID" value="DAA10020.1"/>
    <property type="molecule type" value="Genomic_DNA"/>
</dbReference>
<dbReference type="PIR" id="S54492">
    <property type="entry name" value="S54492"/>
</dbReference>
<dbReference type="RefSeq" id="NP_013842.1">
    <property type="nucleotide sequence ID" value="NM_001182624.1"/>
</dbReference>
<dbReference type="BioGRID" id="35300">
    <property type="interactions" value="483"/>
</dbReference>
<dbReference type="DIP" id="DIP-4436N"/>
<dbReference type="FunCoup" id="Q03880">
    <property type="interactions" value="58"/>
</dbReference>
<dbReference type="IntAct" id="Q03880">
    <property type="interactions" value="5"/>
</dbReference>
<dbReference type="MINT" id="Q03880"/>
<dbReference type="STRING" id="4932.YMR123W"/>
<dbReference type="iPTMnet" id="Q03880"/>
<dbReference type="PaxDb" id="4932-YMR123W"/>
<dbReference type="PeptideAtlas" id="Q03880"/>
<dbReference type="TopDownProteomics" id="Q03880"/>
<dbReference type="EnsemblFungi" id="YMR123W_mRNA">
    <property type="protein sequence ID" value="YMR123W"/>
    <property type="gene ID" value="YMR123W"/>
</dbReference>
<dbReference type="GeneID" id="855153"/>
<dbReference type="KEGG" id="sce:YMR123W"/>
<dbReference type="AGR" id="SGD:S000004730"/>
<dbReference type="SGD" id="S000004730">
    <property type="gene designation" value="PKR1"/>
</dbReference>
<dbReference type="VEuPathDB" id="FungiDB:YMR123W"/>
<dbReference type="eggNOG" id="ENOG502S6V3">
    <property type="taxonomic scope" value="Eukaryota"/>
</dbReference>
<dbReference type="HOGENOM" id="CLU_068499_1_0_1"/>
<dbReference type="InParanoid" id="Q03880"/>
<dbReference type="OMA" id="VKLWEDI"/>
<dbReference type="OrthoDB" id="9626941at2759"/>
<dbReference type="BioCyc" id="YEAST:G3O-32816-MONOMER"/>
<dbReference type="BioGRID-ORCS" id="855153">
    <property type="hits" value="2 hits in 10 CRISPR screens"/>
</dbReference>
<dbReference type="PRO" id="PR:Q03880"/>
<dbReference type="Proteomes" id="UP000002311">
    <property type="component" value="Chromosome XIII"/>
</dbReference>
<dbReference type="RNAct" id="Q03880">
    <property type="molecule type" value="protein"/>
</dbReference>
<dbReference type="GO" id="GO:0005783">
    <property type="term" value="C:endoplasmic reticulum"/>
    <property type="evidence" value="ECO:0007005"/>
    <property type="project" value="SGD"/>
</dbReference>
<dbReference type="GO" id="GO:0005789">
    <property type="term" value="C:endoplasmic reticulum membrane"/>
    <property type="evidence" value="ECO:0000314"/>
    <property type="project" value="SGD"/>
</dbReference>
<dbReference type="GO" id="GO:0070072">
    <property type="term" value="P:vacuolar proton-transporting V-type ATPase complex assembly"/>
    <property type="evidence" value="ECO:0000315"/>
    <property type="project" value="SGD"/>
</dbReference>
<dbReference type="InterPro" id="IPR013945">
    <property type="entry name" value="Pkr1"/>
</dbReference>
<dbReference type="PANTHER" id="PTHR28251">
    <property type="entry name" value="V-TYPE ATPASE ASSEMBLY FACTOR PKR1"/>
    <property type="match status" value="1"/>
</dbReference>
<dbReference type="PANTHER" id="PTHR28251:SF1">
    <property type="entry name" value="V-TYPE ATPASE ASSEMBLY FACTOR PKR1"/>
    <property type="match status" value="1"/>
</dbReference>
<dbReference type="Pfam" id="PF08636">
    <property type="entry name" value="Pkr1"/>
    <property type="match status" value="1"/>
</dbReference>
<evidence type="ECO:0000255" key="1"/>
<evidence type="ECO:0000256" key="2">
    <source>
        <dbReference type="SAM" id="MobiDB-lite"/>
    </source>
</evidence>
<evidence type="ECO:0000269" key="3">
    <source>
    </source>
</evidence>
<evidence type="ECO:0000269" key="4">
    <source>
    </source>
</evidence>
<evidence type="ECO:0000269" key="5">
    <source>
    </source>
</evidence>
<evidence type="ECO:0000305" key="6"/>
<protein>
    <recommendedName>
        <fullName>V-type ATPase assembly factor PKR1</fullName>
    </recommendedName>
</protein>
<feature type="chain" id="PRO_0000203297" description="V-type ATPase assembly factor PKR1">
    <location>
        <begin position="1"/>
        <end position="122"/>
    </location>
</feature>
<feature type="topological domain" description="Cytoplasmic" evidence="1">
    <location>
        <begin position="1"/>
        <end position="20"/>
    </location>
</feature>
<feature type="transmembrane region" description="Helical" evidence="1">
    <location>
        <begin position="21"/>
        <end position="41"/>
    </location>
</feature>
<feature type="topological domain" description="Lumenal" evidence="1">
    <location>
        <begin position="42"/>
        <end position="46"/>
    </location>
</feature>
<feature type="transmembrane region" description="Helical" evidence="1">
    <location>
        <begin position="47"/>
        <end position="67"/>
    </location>
</feature>
<feature type="topological domain" description="Cytoplasmic" evidence="1">
    <location>
        <begin position="68"/>
        <end position="122"/>
    </location>
</feature>
<feature type="region of interest" description="Disordered" evidence="2">
    <location>
        <begin position="82"/>
        <end position="122"/>
    </location>
</feature>
<feature type="compositionally biased region" description="Basic and acidic residues" evidence="2">
    <location>
        <begin position="82"/>
        <end position="103"/>
    </location>
</feature>
<feature type="compositionally biased region" description="Polar residues" evidence="2">
    <location>
        <begin position="104"/>
        <end position="122"/>
    </location>
</feature>